<protein>
    <recommendedName>
        <fullName evidence="1">6-carboxyhexanoate--CoA ligase</fullName>
        <ecNumber evidence="1">6.2.1.14</ecNumber>
    </recommendedName>
    <alternativeName>
        <fullName evidence="1">Pimeloyl-CoA synthase</fullName>
    </alternativeName>
</protein>
<reference key="1">
    <citation type="journal article" date="2005" name="J. Bacteriol.">
        <title>Insights on evolution of virulence and resistance from the complete genome analysis of an early methicillin-resistant Staphylococcus aureus strain and a biofilm-producing methicillin-resistant Staphylococcus epidermidis strain.</title>
        <authorList>
            <person name="Gill S.R."/>
            <person name="Fouts D.E."/>
            <person name="Archer G.L."/>
            <person name="Mongodin E.F."/>
            <person name="DeBoy R.T."/>
            <person name="Ravel J."/>
            <person name="Paulsen I.T."/>
            <person name="Kolonay J.F."/>
            <person name="Brinkac L.M."/>
            <person name="Beanan M.J."/>
            <person name="Dodson R.J."/>
            <person name="Daugherty S.C."/>
            <person name="Madupu R."/>
            <person name="Angiuoli S.V."/>
            <person name="Durkin A.S."/>
            <person name="Haft D.H."/>
            <person name="Vamathevan J.J."/>
            <person name="Khouri H."/>
            <person name="Utterback T.R."/>
            <person name="Lee C."/>
            <person name="Dimitrov G."/>
            <person name="Jiang L."/>
            <person name="Qin H."/>
            <person name="Weidman J."/>
            <person name="Tran K."/>
            <person name="Kang K.H."/>
            <person name="Hance I.R."/>
            <person name="Nelson K.E."/>
            <person name="Fraser C.M."/>
        </authorList>
    </citation>
    <scope>NUCLEOTIDE SEQUENCE [LARGE SCALE GENOMIC DNA]</scope>
    <source>
        <strain>COL</strain>
    </source>
</reference>
<evidence type="ECO:0000255" key="1">
    <source>
        <dbReference type="HAMAP-Rule" id="MF_00668"/>
    </source>
</evidence>
<proteinExistence type="inferred from homology"/>
<name>BIOW_STAAC</name>
<comment type="function">
    <text evidence="1">Catalyzes the transformation of pimelate into pimeloyl-CoA with concomitant hydrolysis of ATP to AMP.</text>
</comment>
<comment type="catalytic activity">
    <reaction evidence="1">
        <text>heptanedioate + ATP + CoA = 6-carboxyhexanoyl-CoA + AMP + diphosphate</text>
        <dbReference type="Rhea" id="RHEA:14781"/>
        <dbReference type="ChEBI" id="CHEBI:30616"/>
        <dbReference type="ChEBI" id="CHEBI:33019"/>
        <dbReference type="ChEBI" id="CHEBI:36165"/>
        <dbReference type="ChEBI" id="CHEBI:57287"/>
        <dbReference type="ChEBI" id="CHEBI:57360"/>
        <dbReference type="ChEBI" id="CHEBI:456215"/>
        <dbReference type="EC" id="6.2.1.14"/>
    </reaction>
</comment>
<comment type="cofactor">
    <cofactor evidence="1">
        <name>Mg(2+)</name>
        <dbReference type="ChEBI" id="CHEBI:18420"/>
    </cofactor>
</comment>
<comment type="pathway">
    <text evidence="1">Metabolic intermediate metabolism; pimeloyl-CoA biosynthesis; pimeloyl-CoA from pimelate: step 1/1.</text>
</comment>
<comment type="subunit">
    <text evidence="1">Homodimer.</text>
</comment>
<comment type="similarity">
    <text evidence="1">Belongs to the BioW family.</text>
</comment>
<organism>
    <name type="scientific">Staphylococcus aureus (strain COL)</name>
    <dbReference type="NCBI Taxonomy" id="93062"/>
    <lineage>
        <taxon>Bacteria</taxon>
        <taxon>Bacillati</taxon>
        <taxon>Bacillota</taxon>
        <taxon>Bacilli</taxon>
        <taxon>Bacillales</taxon>
        <taxon>Staphylococcaceae</taxon>
        <taxon>Staphylococcus</taxon>
    </lineage>
</organism>
<gene>
    <name evidence="1" type="primary">bioW</name>
    <name type="ordered locus">SACOL2424</name>
</gene>
<feature type="chain" id="PRO_0000191017" description="6-carboxyhexanoate--CoA ligase">
    <location>
        <begin position="1"/>
        <end position="230"/>
    </location>
</feature>
<dbReference type="EC" id="6.2.1.14" evidence="1"/>
<dbReference type="EMBL" id="CP000046">
    <property type="protein sequence ID" value="AAW37248.1"/>
    <property type="molecule type" value="Genomic_DNA"/>
</dbReference>
<dbReference type="RefSeq" id="WP_000286875.1">
    <property type="nucleotide sequence ID" value="NZ_JBGOFO010000004.1"/>
</dbReference>
<dbReference type="SMR" id="Q5HDD1"/>
<dbReference type="KEGG" id="sac:SACOL2424"/>
<dbReference type="HOGENOM" id="CLU_076858_0_0_9"/>
<dbReference type="UniPathway" id="UPA00999">
    <property type="reaction ID" value="UER00351"/>
</dbReference>
<dbReference type="Proteomes" id="UP000000530">
    <property type="component" value="Chromosome"/>
</dbReference>
<dbReference type="GO" id="GO:0042410">
    <property type="term" value="F:6-carboxyhexanoate-CoA ligase activity"/>
    <property type="evidence" value="ECO:0007669"/>
    <property type="project" value="UniProtKB-UniRule"/>
</dbReference>
<dbReference type="GO" id="GO:0005524">
    <property type="term" value="F:ATP binding"/>
    <property type="evidence" value="ECO:0007669"/>
    <property type="project" value="UniProtKB-KW"/>
</dbReference>
<dbReference type="GO" id="GO:0000287">
    <property type="term" value="F:magnesium ion binding"/>
    <property type="evidence" value="ECO:0007669"/>
    <property type="project" value="UniProtKB-UniRule"/>
</dbReference>
<dbReference type="GO" id="GO:0009102">
    <property type="term" value="P:biotin biosynthetic process"/>
    <property type="evidence" value="ECO:0007669"/>
    <property type="project" value="UniProtKB-UniRule"/>
</dbReference>
<dbReference type="HAMAP" id="MF_00668">
    <property type="entry name" value="BioW"/>
    <property type="match status" value="1"/>
</dbReference>
<dbReference type="InterPro" id="IPR005499">
    <property type="entry name" value="BioW"/>
</dbReference>
<dbReference type="NCBIfam" id="NF002360">
    <property type="entry name" value="PRK01322.1"/>
    <property type="match status" value="1"/>
</dbReference>
<dbReference type="Pfam" id="PF03744">
    <property type="entry name" value="BioW"/>
    <property type="match status" value="1"/>
</dbReference>
<accession>Q5HDD1</accession>
<keyword id="KW-0067">ATP-binding</keyword>
<keyword id="KW-0093">Biotin biosynthesis</keyword>
<keyword id="KW-0436">Ligase</keyword>
<keyword id="KW-0460">Magnesium</keyword>
<keyword id="KW-0547">Nucleotide-binding</keyword>
<sequence length="230" mass="26092">MYSIKMRSSNQDVHISGAETICEFDKIEQTVQRFYNKGFFHENGQPDFLNIKIQKIMEPIQQIKALQIIEDDKANLQHLTQECGVTEQALNQGMTYIKNETVYTGAIILSAISGKRLDSFGQRGIRATHFSFEDINNKGDLNERVTDALAIASCINAHPYVKGELCVSDDLTYTTGYFAAAKIGYHRLFDIKPVNTRYGGRIIFVDDCIDLNHYISFLESTPKQVVYETV</sequence>